<reference key="1">
    <citation type="journal article" date="1985" name="Nature">
        <title>Primary structure and transmembrane orientation of the murine anion exchange protein.</title>
        <authorList>
            <person name="Kopito R.R."/>
            <person name="Lodish H.F."/>
        </authorList>
    </citation>
    <scope>NUCLEOTIDE SEQUENCE [MRNA]</scope>
</reference>
<reference key="2">
    <citation type="journal article" date="1985" name="J. Cell. Biochem.">
        <title>Structure of the murine anion exchange protein.</title>
        <authorList>
            <person name="Kopito R.R."/>
            <person name="Lodish H.F."/>
        </authorList>
    </citation>
    <scope>NUCLEOTIDE SEQUENCE [MRNA]</scope>
</reference>
<reference key="3">
    <citation type="journal article" date="1987" name="J. Biol. Chem.">
        <title>Structure and organization of the murine band 3 gene.</title>
        <authorList>
            <person name="Kopito R.R."/>
            <person name="Andersson M."/>
            <person name="Lodish H.F."/>
        </authorList>
    </citation>
    <scope>PARTIAL NUCLEOTIDE SEQUENCE [GENOMIC DNA]</scope>
</reference>
<reference key="4">
    <citation type="submission" date="1987-07" db="EMBL/GenBank/DDBJ databases">
        <authorList>
            <person name="Kopito R.R."/>
        </authorList>
    </citation>
    <scope>NUCLEOTIDE SEQUENCE</scope>
</reference>
<reference key="5">
    <citation type="journal article" date="2004" name="Genome Res.">
        <title>The status, quality, and expansion of the NIH full-length cDNA project: the Mammalian Gene Collection (MGC).</title>
        <authorList>
            <consortium name="The MGC Project Team"/>
        </authorList>
    </citation>
    <scope>NUCLEOTIDE SEQUENCE [LARGE SCALE MRNA] (ISOFORM 1)</scope>
    <source>
        <strain>C57BL/6J</strain>
        <tissue>Brain</tissue>
        <tissue>Limb</tissue>
    </source>
</reference>
<reference key="6">
    <citation type="journal article" date="1986" name="EMBO J.">
        <title>Cloning and structural characterization of a human non-erythroid band 3-like protein.</title>
        <authorList>
            <person name="Demuth D.R."/>
            <person name="Showe L.C."/>
            <person name="Ballantine M."/>
            <person name="Palumbo A."/>
            <person name="Fraser P.J."/>
            <person name="Cioe L."/>
            <person name="Rovera G."/>
            <person name="Curtis P.J."/>
        </authorList>
    </citation>
    <scope>NUCLEOTIDE SEQUENCE [MRNA] OF 11-929</scope>
</reference>
<reference key="7">
    <citation type="journal article" date="1989" name="Biochim. Biophys. Acta">
        <title>Major proteolytic fragments of the murine band 3 protein as obtained after in situ proteolysis.</title>
        <authorList>
            <person name="Raida M."/>
            <person name="Wendel J."/>
            <person name="Kojro E."/>
            <person name="Fahrenholz F."/>
            <person name="Fasold H."/>
            <person name="Legrum B."/>
            <person name="Passow H."/>
        </authorList>
    </citation>
    <scope>PROTEIN SEQUENCE OF 33-47; 360-375; 382-395 AND 578-590</scope>
    <scope>TISSUE SPECIFICITY</scope>
    <scope>SUBCELLULAR LOCATION</scope>
</reference>
<reference key="8">
    <citation type="journal article" date="1998" name="Blood">
        <title>Complete deficiency of glycophorin A in red blood cells from mice with targeted inactivation of the band 3 (AE1) gene.</title>
        <authorList>
            <person name="Hassoun H."/>
            <person name="Hanada T."/>
            <person name="Lutchman M."/>
            <person name="Sahr K.E."/>
            <person name="Palek J."/>
            <person name="Hanspal M."/>
            <person name="Chishti A.H."/>
        </authorList>
    </citation>
    <scope>DISRUPTION PHENOTYPE</scope>
</reference>
<reference key="9">
    <citation type="journal article" date="2006" name="Mol. Cell. Proteomics">
        <title>Comprehensive identification of phosphorylation sites in postsynaptic density preparations.</title>
        <authorList>
            <person name="Trinidad J.C."/>
            <person name="Specht C.G."/>
            <person name="Thalhammer A."/>
            <person name="Schoepfer R."/>
            <person name="Burlingame A.L."/>
        </authorList>
    </citation>
    <scope>IDENTIFICATION BY MASS SPECTROMETRY [LARGE SCALE ANALYSIS]</scope>
    <source>
        <tissue>Brain</tissue>
    </source>
</reference>
<reference key="10">
    <citation type="journal article" date="2007" name="Proc. Natl. Acad. Sci. U.S.A.">
        <title>Large-scale phosphorylation analysis of mouse liver.</title>
        <authorList>
            <person name="Villen J."/>
            <person name="Beausoleil S.A."/>
            <person name="Gerber S.A."/>
            <person name="Gygi S.P."/>
        </authorList>
    </citation>
    <scope>IDENTIFICATION BY MASS SPECTROMETRY [LARGE SCALE ANALYSIS]</scope>
    <source>
        <tissue>Liver</tissue>
    </source>
</reference>
<reference key="11">
    <citation type="journal article" date="2010" name="Cell">
        <title>A tissue-specific atlas of mouse protein phosphorylation and expression.</title>
        <authorList>
            <person name="Huttlin E.L."/>
            <person name="Jedrychowski M.P."/>
            <person name="Elias J.E."/>
            <person name="Goswami T."/>
            <person name="Rad R."/>
            <person name="Beausoleil S.A."/>
            <person name="Villen J."/>
            <person name="Haas W."/>
            <person name="Sowa M.E."/>
            <person name="Gygi S.P."/>
        </authorList>
    </citation>
    <scope>PHOSPHORYLATION [LARGE SCALE ANALYSIS] AT SER-18; SER-363 AND THR-374</scope>
    <scope>IDENTIFICATION BY MASS SPECTROMETRY [LARGE SCALE ANALYSIS]</scope>
    <source>
        <tissue>Brain</tissue>
        <tissue>Brown adipose tissue</tissue>
        <tissue>Heart</tissue>
        <tissue>Kidney</tissue>
        <tissue>Liver</tissue>
        <tissue>Lung</tissue>
        <tissue>Pancreas</tissue>
        <tissue>Spleen</tissue>
        <tissue>Testis</tissue>
    </source>
</reference>
<feature type="chain" id="PRO_0000079210" description="Band 3 anion transport protein">
    <location>
        <begin position="1"/>
        <end position="929"/>
    </location>
</feature>
<feature type="topological domain" description="Cytoplasmic" evidence="2">
    <location>
        <begin position="1"/>
        <end position="422"/>
    </location>
</feature>
<feature type="transmembrane region" description="Helical; Name=1" evidence="2">
    <location>
        <begin position="423"/>
        <end position="446"/>
    </location>
</feature>
<feature type="topological domain" description="Extracellular" evidence="2">
    <location>
        <begin position="447"/>
        <end position="454"/>
    </location>
</feature>
<feature type="transmembrane region" description="Helical; Name=2" evidence="2">
    <location>
        <begin position="455"/>
        <end position="475"/>
    </location>
</feature>
<feature type="topological domain" description="Cytoplasmic" evidence="2">
    <location>
        <begin position="476"/>
        <end position="478"/>
    </location>
</feature>
<feature type="transmembrane region" description="Discontinuously helical; Name=3" evidence="2">
    <location>
        <begin position="479"/>
        <end position="495"/>
    </location>
</feature>
<feature type="topological domain" description="Extracellular" evidence="2">
    <location>
        <begin position="496"/>
        <end position="504"/>
    </location>
</feature>
<feature type="transmembrane region" description="Helical; Name=4" evidence="2">
    <location>
        <begin position="505"/>
        <end position="525"/>
    </location>
</feature>
<feature type="topological domain" description="Cytoplasmic" evidence="2">
    <location>
        <begin position="526"/>
        <end position="537"/>
    </location>
</feature>
<feature type="transmembrane region" description="Helical; Name=5" evidence="2">
    <location>
        <begin position="538"/>
        <end position="560"/>
    </location>
</feature>
<feature type="topological domain" description="Extracellular" evidence="2">
    <location>
        <begin position="561"/>
        <end position="588"/>
    </location>
</feature>
<feature type="transmembrane region" description="Helical; Name=6" evidence="2">
    <location>
        <begin position="589"/>
        <end position="609"/>
    </location>
</feature>
<feature type="topological domain" description="Cytoplasmic" evidence="2">
    <location>
        <begin position="610"/>
        <end position="620"/>
    </location>
</feature>
<feature type="transmembrane region" description="Helical; Name=7" evidence="2">
    <location>
        <begin position="621"/>
        <end position="641"/>
    </location>
</feature>
<feature type="topological domain" description="Extracellular" evidence="2">
    <location>
        <begin position="642"/>
        <end position="681"/>
    </location>
</feature>
<feature type="transmembrane region" description="Helical; Name=8" evidence="2">
    <location>
        <begin position="682"/>
        <end position="702"/>
    </location>
</feature>
<feature type="topological domain" description="Cytoplasmic" evidence="2">
    <location>
        <begin position="703"/>
        <end position="718"/>
    </location>
</feature>
<feature type="transmembrane region" description="Helical; Name=9" evidence="2">
    <location>
        <begin position="719"/>
        <end position="737"/>
    </location>
</feature>
<feature type="transmembrane region" description="Discontinuously helical; Name=10" evidence="2">
    <location>
        <begin position="738"/>
        <end position="755"/>
    </location>
</feature>
<feature type="topological domain" description="Cytoplasmic" evidence="2">
    <location>
        <begin position="756"/>
        <end position="778"/>
    </location>
</feature>
<feature type="transmembrane region" description="Helical; Name=11" evidence="2">
    <location>
        <begin position="779"/>
        <end position="799"/>
    </location>
</feature>
<feature type="transmembrane region" description="Helical; Name=12" evidence="2">
    <location>
        <begin position="800"/>
        <end position="818"/>
    </location>
</feature>
<feature type="topological domain" description="Cytoplasmic" evidence="2">
    <location>
        <begin position="819"/>
        <end position="856"/>
    </location>
</feature>
<feature type="intramembrane region" description="Discontinuously helical" evidence="2">
    <location>
        <begin position="857"/>
        <end position="887"/>
    </location>
</feature>
<feature type="topological domain" description="Cytoplasmic" evidence="2">
    <location>
        <begin position="888"/>
        <end position="929"/>
    </location>
</feature>
<feature type="region of interest" description="Disordered" evidence="4">
    <location>
        <begin position="46"/>
        <end position="67"/>
    </location>
</feature>
<feature type="region of interest" description="Globular" evidence="1">
    <location>
        <begin position="69"/>
        <end position="303"/>
    </location>
</feature>
<feature type="region of interest" description="Interaction with ANK1" evidence="1">
    <location>
        <begin position="190"/>
        <end position="199"/>
    </location>
</feature>
<feature type="region of interest" description="Dimerization arm" evidence="1">
    <location>
        <begin position="317"/>
        <end position="370"/>
    </location>
</feature>
<feature type="region of interest" description="Disordered" evidence="4">
    <location>
        <begin position="366"/>
        <end position="389"/>
    </location>
</feature>
<feature type="compositionally biased region" description="Low complexity" evidence="4">
    <location>
        <begin position="58"/>
        <end position="67"/>
    </location>
</feature>
<feature type="modified residue" description="N-acetylmethionine" evidence="2">
    <location>
        <position position="1"/>
    </location>
</feature>
<feature type="modified residue" description="Phosphoserine" evidence="9">
    <location>
        <position position="18"/>
    </location>
</feature>
<feature type="modified residue" description="Phosphotyrosine" evidence="2">
    <location>
        <position position="31"/>
    </location>
</feature>
<feature type="modified residue" description="Phosphotyrosine" evidence="2">
    <location>
        <position position="56"/>
    </location>
</feature>
<feature type="modified residue" description="Phosphoserine" evidence="3">
    <location>
        <position position="199"/>
    </location>
</feature>
<feature type="modified residue" description="Phosphoserine" evidence="3">
    <location>
        <position position="222"/>
    </location>
</feature>
<feature type="modified residue" description="Phosphoserine" evidence="9">
    <location>
        <position position="363"/>
    </location>
</feature>
<feature type="modified residue" description="Phosphotyrosine" evidence="2">
    <location>
        <position position="372"/>
    </location>
</feature>
<feature type="modified residue" description="Phosphothreonine" evidence="9">
    <location>
        <position position="374"/>
    </location>
</feature>
<feature type="modified residue" description="Phosphotyrosine" evidence="2">
    <location>
        <position position="922"/>
    </location>
</feature>
<feature type="lipid moiety-binding region" description="S-palmitoyl cysteine" evidence="1">
    <location>
        <position position="861"/>
    </location>
</feature>
<feature type="glycosylation site" description="N-linked (GlcNAc...) asparagine" evidence="7">
    <location>
        <position position="660"/>
    </location>
</feature>
<feature type="splice variant" id="VSP_000454" description="In isoform 2." evidence="7">
    <location>
        <begin position="1"/>
        <end position="79"/>
    </location>
</feature>
<feature type="sequence conflict" description="In Ref. 6; CAA27555." evidence="7" ref="6">
    <original>G</original>
    <variation>S</variation>
    <location>
        <position position="467"/>
    </location>
</feature>
<name>B3AT_MOUSE</name>
<organism>
    <name type="scientific">Mus musculus</name>
    <name type="common">Mouse</name>
    <dbReference type="NCBI Taxonomy" id="10090"/>
    <lineage>
        <taxon>Eukaryota</taxon>
        <taxon>Metazoa</taxon>
        <taxon>Chordata</taxon>
        <taxon>Craniata</taxon>
        <taxon>Vertebrata</taxon>
        <taxon>Euteleostomi</taxon>
        <taxon>Mammalia</taxon>
        <taxon>Eutheria</taxon>
        <taxon>Euarchontoglires</taxon>
        <taxon>Glires</taxon>
        <taxon>Rodentia</taxon>
        <taxon>Myomorpha</taxon>
        <taxon>Muroidea</taxon>
        <taxon>Muridae</taxon>
        <taxon>Murinae</taxon>
        <taxon>Mus</taxon>
        <taxon>Mus</taxon>
    </lineage>
</organism>
<gene>
    <name evidence="8" type="primary">Slc4a1</name>
    <name type="synonym">Ae1</name>
</gene>
<dbReference type="EMBL" id="X02677">
    <property type="protein sequence ID" value="CAA26506.1"/>
    <property type="molecule type" value="mRNA"/>
</dbReference>
<dbReference type="EMBL" id="M29379">
    <property type="protein sequence ID" value="AAA37187.1"/>
    <property type="molecule type" value="mRNA"/>
</dbReference>
<dbReference type="EMBL" id="J02756">
    <property type="protein sequence ID" value="AAA37278.1"/>
    <property type="molecule type" value="Genomic_DNA"/>
</dbReference>
<dbReference type="EMBL" id="BC052419">
    <property type="protein sequence ID" value="AAH52419.1"/>
    <property type="molecule type" value="mRNA"/>
</dbReference>
<dbReference type="EMBL" id="BC053429">
    <property type="protein sequence ID" value="AAH53429.1"/>
    <property type="molecule type" value="mRNA"/>
</dbReference>
<dbReference type="EMBL" id="X03917">
    <property type="protein sequence ID" value="CAA27555.1"/>
    <property type="molecule type" value="mRNA"/>
</dbReference>
<dbReference type="CCDS" id="CCDS25496.1">
    <molecule id="P04919-1"/>
</dbReference>
<dbReference type="PIR" id="A25314">
    <property type="entry name" value="A25314"/>
</dbReference>
<dbReference type="RefSeq" id="NP_035533.1">
    <molecule id="P04919-1"/>
    <property type="nucleotide sequence ID" value="NM_011403.3"/>
</dbReference>
<dbReference type="SMR" id="P04919"/>
<dbReference type="BioGRID" id="203312">
    <property type="interactions" value="5"/>
</dbReference>
<dbReference type="FunCoup" id="P04919">
    <property type="interactions" value="55"/>
</dbReference>
<dbReference type="IntAct" id="P04919">
    <property type="interactions" value="2"/>
</dbReference>
<dbReference type="STRING" id="10090.ENSMUSP00000006749"/>
<dbReference type="ChEMBL" id="CHEMBL4523166"/>
<dbReference type="GlyCosmos" id="P04919">
    <property type="glycosylation" value="1 site, No reported glycans"/>
</dbReference>
<dbReference type="GlyGen" id="P04919">
    <property type="glycosylation" value="1 site, 1 N-linked glycan (1 site)"/>
</dbReference>
<dbReference type="iPTMnet" id="P04919"/>
<dbReference type="PhosphoSitePlus" id="P04919"/>
<dbReference type="SwissPalm" id="P04919"/>
<dbReference type="CPTAC" id="non-CPTAC-3692"/>
<dbReference type="jPOST" id="P04919"/>
<dbReference type="PaxDb" id="10090-ENSMUSP00000006749"/>
<dbReference type="PeptideAtlas" id="P04919"/>
<dbReference type="ProteomicsDB" id="265187">
    <molecule id="P04919-1"/>
</dbReference>
<dbReference type="ProteomicsDB" id="265188">
    <molecule id="P04919-2"/>
</dbReference>
<dbReference type="Antibodypedia" id="2977">
    <property type="antibodies" value="357 antibodies from 36 providers"/>
</dbReference>
<dbReference type="DNASU" id="20533"/>
<dbReference type="Ensembl" id="ENSMUST00000006749.10">
    <molecule id="P04919-1"/>
    <property type="protein sequence ID" value="ENSMUSP00000006749.10"/>
    <property type="gene ID" value="ENSMUSG00000006574.16"/>
</dbReference>
<dbReference type="GeneID" id="20533"/>
<dbReference type="KEGG" id="mmu:20533"/>
<dbReference type="UCSC" id="uc007lrp.2">
    <molecule id="P04919-1"/>
    <property type="organism name" value="mouse"/>
</dbReference>
<dbReference type="AGR" id="MGI:109393"/>
<dbReference type="CTD" id="6521"/>
<dbReference type="MGI" id="MGI:109393">
    <property type="gene designation" value="Slc4a1"/>
</dbReference>
<dbReference type="VEuPathDB" id="HostDB:ENSMUSG00000006574"/>
<dbReference type="eggNOG" id="KOG1172">
    <property type="taxonomic scope" value="Eukaryota"/>
</dbReference>
<dbReference type="GeneTree" id="ENSGT00940000157423"/>
<dbReference type="HOGENOM" id="CLU_002289_1_0_1"/>
<dbReference type="InParanoid" id="P04919"/>
<dbReference type="OMA" id="YSHFPIW"/>
<dbReference type="OrthoDB" id="1735926at2759"/>
<dbReference type="PhylomeDB" id="P04919"/>
<dbReference type="TreeFam" id="TF313630"/>
<dbReference type="Reactome" id="R-MMU-1237044">
    <property type="pathway name" value="Erythrocytes take up carbon dioxide and release oxygen"/>
</dbReference>
<dbReference type="Reactome" id="R-MMU-1247673">
    <property type="pathway name" value="Erythrocytes take up oxygen and release carbon dioxide"/>
</dbReference>
<dbReference type="Reactome" id="R-MMU-425381">
    <property type="pathway name" value="Bicarbonate transporters"/>
</dbReference>
<dbReference type="BioGRID-ORCS" id="20533">
    <property type="hits" value="3 hits in 76 CRISPR screens"/>
</dbReference>
<dbReference type="ChiTaRS" id="Slc4a1">
    <property type="organism name" value="mouse"/>
</dbReference>
<dbReference type="PRO" id="PR:P04919"/>
<dbReference type="Proteomes" id="UP000000589">
    <property type="component" value="Chromosome 11"/>
</dbReference>
<dbReference type="RNAct" id="P04919">
    <property type="molecule type" value="protein"/>
</dbReference>
<dbReference type="Bgee" id="ENSMUSG00000006574">
    <property type="expression patterns" value="Expressed in fetal liver hematopoietic progenitor cell and 192 other cell types or tissues"/>
</dbReference>
<dbReference type="ExpressionAtlas" id="P04919">
    <property type="expression patterns" value="baseline and differential"/>
</dbReference>
<dbReference type="GO" id="GO:0170014">
    <property type="term" value="C:ankyrin-1 complex"/>
    <property type="evidence" value="ECO:0000250"/>
    <property type="project" value="UniProtKB"/>
</dbReference>
<dbReference type="GO" id="GO:0016323">
    <property type="term" value="C:basolateral plasma membrane"/>
    <property type="evidence" value="ECO:0000314"/>
    <property type="project" value="UniProtKB"/>
</dbReference>
<dbReference type="GO" id="GO:0030863">
    <property type="term" value="C:cortical cytoskeleton"/>
    <property type="evidence" value="ECO:0000314"/>
    <property type="project" value="MGI"/>
</dbReference>
<dbReference type="GO" id="GO:0009898">
    <property type="term" value="C:cytoplasmic side of plasma membrane"/>
    <property type="evidence" value="ECO:0000314"/>
    <property type="project" value="MGI"/>
</dbReference>
<dbReference type="GO" id="GO:0016020">
    <property type="term" value="C:membrane"/>
    <property type="evidence" value="ECO:0000314"/>
    <property type="project" value="UniProtKB"/>
</dbReference>
<dbReference type="GO" id="GO:0005886">
    <property type="term" value="C:plasma membrane"/>
    <property type="evidence" value="ECO:0000314"/>
    <property type="project" value="MGI"/>
</dbReference>
<dbReference type="GO" id="GO:0030018">
    <property type="term" value="C:Z disc"/>
    <property type="evidence" value="ECO:0000250"/>
    <property type="project" value="UniProtKB"/>
</dbReference>
<dbReference type="GO" id="GO:0022853">
    <property type="term" value="F:active monoatomic ion transmembrane transporter activity"/>
    <property type="evidence" value="ECO:0007669"/>
    <property type="project" value="UniProtKB-ARBA"/>
</dbReference>
<dbReference type="GO" id="GO:0030506">
    <property type="term" value="F:ankyrin binding"/>
    <property type="evidence" value="ECO:0000353"/>
    <property type="project" value="MGI"/>
</dbReference>
<dbReference type="GO" id="GO:0015106">
    <property type="term" value="F:bicarbonate transmembrane transporter activity"/>
    <property type="evidence" value="ECO:0000314"/>
    <property type="project" value="MGI"/>
</dbReference>
<dbReference type="GO" id="GO:0015108">
    <property type="term" value="F:chloride transmembrane transporter activity"/>
    <property type="evidence" value="ECO:0000314"/>
    <property type="project" value="UniProtKB"/>
</dbReference>
<dbReference type="GO" id="GO:0140900">
    <property type="term" value="F:chloride:bicarbonate antiporter activity"/>
    <property type="evidence" value="ECO:0000315"/>
    <property type="project" value="MGI"/>
</dbReference>
<dbReference type="GO" id="GO:0030492">
    <property type="term" value="F:hemoglobin binding"/>
    <property type="evidence" value="ECO:0000314"/>
    <property type="project" value="MGI"/>
</dbReference>
<dbReference type="GO" id="GO:0042803">
    <property type="term" value="F:protein homodimerization activity"/>
    <property type="evidence" value="ECO:0007669"/>
    <property type="project" value="Ensembl"/>
</dbReference>
<dbReference type="GO" id="GO:0005452">
    <property type="term" value="F:solute:inorganic anion antiporter activity"/>
    <property type="evidence" value="ECO:0000250"/>
    <property type="project" value="UniProtKB"/>
</dbReference>
<dbReference type="GO" id="GO:0015701">
    <property type="term" value="P:bicarbonate transport"/>
    <property type="evidence" value="ECO:0000314"/>
    <property type="project" value="MGI"/>
</dbReference>
<dbReference type="GO" id="GO:0007596">
    <property type="term" value="P:blood coagulation"/>
    <property type="evidence" value="ECO:0000315"/>
    <property type="project" value="MGI"/>
</dbReference>
<dbReference type="GO" id="GO:0006821">
    <property type="term" value="P:chloride transport"/>
    <property type="evidence" value="ECO:0000314"/>
    <property type="project" value="UniProtKB"/>
</dbReference>
<dbReference type="GO" id="GO:0048821">
    <property type="term" value="P:erythrocyte development"/>
    <property type="evidence" value="ECO:0000315"/>
    <property type="project" value="MGI"/>
</dbReference>
<dbReference type="GO" id="GO:1904539">
    <property type="term" value="P:negative regulation of glycolytic process through fructose-6-phosphate"/>
    <property type="evidence" value="ECO:0000315"/>
    <property type="project" value="MGI"/>
</dbReference>
<dbReference type="GO" id="GO:0035811">
    <property type="term" value="P:negative regulation of urine volume"/>
    <property type="evidence" value="ECO:0000315"/>
    <property type="project" value="MGI"/>
</dbReference>
<dbReference type="GO" id="GO:0045852">
    <property type="term" value="P:pH elevation"/>
    <property type="evidence" value="ECO:0000315"/>
    <property type="project" value="MGI"/>
</dbReference>
<dbReference type="GO" id="GO:0017121">
    <property type="term" value="P:plasma membrane phospholipid scrambling"/>
    <property type="evidence" value="ECO:0000315"/>
    <property type="project" value="MGI"/>
</dbReference>
<dbReference type="GO" id="GO:0072659">
    <property type="term" value="P:protein localization to plasma membrane"/>
    <property type="evidence" value="ECO:0000315"/>
    <property type="project" value="MGI"/>
</dbReference>
<dbReference type="FunFam" id="1.10.287.570:FF:000001">
    <property type="entry name" value="Anion exchange protein"/>
    <property type="match status" value="1"/>
</dbReference>
<dbReference type="FunFam" id="3.40.930.10:FF:000015">
    <property type="entry name" value="Anion exchange protein"/>
    <property type="match status" value="1"/>
</dbReference>
<dbReference type="Gene3D" id="1.10.287.570">
    <property type="entry name" value="Helical hairpin bin"/>
    <property type="match status" value="1"/>
</dbReference>
<dbReference type="Gene3D" id="3.40.930.10">
    <property type="entry name" value="Mannitol-specific EII, Chain A"/>
    <property type="match status" value="1"/>
</dbReference>
<dbReference type="InterPro" id="IPR001717">
    <property type="entry name" value="Anion_exchange"/>
</dbReference>
<dbReference type="InterPro" id="IPR002977">
    <property type="entry name" value="Anion_exchange_1"/>
</dbReference>
<dbReference type="InterPro" id="IPR018241">
    <property type="entry name" value="Anion_exchange_CS"/>
</dbReference>
<dbReference type="InterPro" id="IPR013769">
    <property type="entry name" value="Band3_cytoplasmic_dom"/>
</dbReference>
<dbReference type="InterPro" id="IPR011531">
    <property type="entry name" value="HCO3_transpt-like_TM_dom"/>
</dbReference>
<dbReference type="InterPro" id="IPR003020">
    <property type="entry name" value="HCO3_transpt_euk"/>
</dbReference>
<dbReference type="InterPro" id="IPR016152">
    <property type="entry name" value="PTrfase/Anion_transptr"/>
</dbReference>
<dbReference type="NCBIfam" id="TIGR00834">
    <property type="entry name" value="ae"/>
    <property type="match status" value="1"/>
</dbReference>
<dbReference type="PANTHER" id="PTHR11453">
    <property type="entry name" value="ANION EXCHANGE PROTEIN"/>
    <property type="match status" value="1"/>
</dbReference>
<dbReference type="PANTHER" id="PTHR11453:SF12">
    <property type="entry name" value="BAND 3 ANION TRANSPORT PROTEIN"/>
    <property type="match status" value="1"/>
</dbReference>
<dbReference type="Pfam" id="PF07565">
    <property type="entry name" value="Band_3_cyto"/>
    <property type="match status" value="1"/>
</dbReference>
<dbReference type="Pfam" id="PF00955">
    <property type="entry name" value="HCO3_cotransp"/>
    <property type="match status" value="2"/>
</dbReference>
<dbReference type="PRINTS" id="PR00165">
    <property type="entry name" value="ANIONEXCHNGR"/>
</dbReference>
<dbReference type="PRINTS" id="PR01187">
    <property type="entry name" value="ANIONEXHNGR1"/>
</dbReference>
<dbReference type="PRINTS" id="PR01231">
    <property type="entry name" value="HCO3TRNSPORT"/>
</dbReference>
<dbReference type="SUPFAM" id="SSF55804">
    <property type="entry name" value="Phoshotransferase/anion transport protein"/>
    <property type="match status" value="1"/>
</dbReference>
<dbReference type="PROSITE" id="PS00219">
    <property type="entry name" value="ANION_EXCHANGER_1"/>
    <property type="match status" value="1"/>
</dbReference>
<dbReference type="PROSITE" id="PS00220">
    <property type="entry name" value="ANION_EXCHANGER_2"/>
    <property type="match status" value="1"/>
</dbReference>
<evidence type="ECO:0000250" key="1"/>
<evidence type="ECO:0000250" key="2">
    <source>
        <dbReference type="UniProtKB" id="P02730"/>
    </source>
</evidence>
<evidence type="ECO:0000250" key="3">
    <source>
        <dbReference type="UniProtKB" id="P23562"/>
    </source>
</evidence>
<evidence type="ECO:0000256" key="4">
    <source>
        <dbReference type="SAM" id="MobiDB-lite"/>
    </source>
</evidence>
<evidence type="ECO:0000269" key="5">
    <source>
    </source>
</evidence>
<evidence type="ECO:0000269" key="6">
    <source>
    </source>
</evidence>
<evidence type="ECO:0000305" key="7"/>
<evidence type="ECO:0000312" key="8">
    <source>
        <dbReference type="MGI" id="MGI:109393"/>
    </source>
</evidence>
<evidence type="ECO:0007744" key="9">
    <source>
    </source>
</evidence>
<sequence length="929" mass="103136">MGDMRDHEEVLEIPDRDSEEELENIIGQIAYRDLTIPVTEMQDPEALPTEQTATDYVPSSTSTPHPSSGQVYVELQELMMDQRNQELQWVEAAHWIGLEENLREDGVWGRPHLSYLTFWSLLELQKVFSKGTFLLGLAETSLAGVANHLLDCFIYEDQIRPQDREELLRALLLKRSHAEDLGNLEGVKPAVLTRSGGASEPLLPHQPSLETQLYCGQAEGGSEGPSTSGTLKIPPDSETTLVLVGRANFLEKPVLGFVRLKEAVPLEDLVLPEPVGFLLVLLGPEAPHVDYTQLGRAAATLMTERVFRITASMAHNREELLRSLESFLDCSLVLPPTDAPSEKALLNLVPVQKELLRRRYLPSPAKPDPNLYNTLDLNGGKGGPGDEDDPLRRTGRIFGGLIRDIRRRYPYYLSDITDALSPQVLAAVIFIYFAALSPAVTFGGLLGEKTRNLMGVSELLISTAVQGILFALLGAQPLLVLGFSGPLLVFEEAFFSFCESNNLEYIVGRAWIGFWLILLVMLVVAFEGSFLVQYISRYTQEIFSFLISLIFIYETFSKLIKIFQDYPLQQTYAPVVMKPKPQGPVPNTALFSLVLMAGTFLLAMTLRKFKNSTYFPGKLRRVIGDFGVPISILIMVLVDSFIKGTYTQKLSVPDGLKVSNSSARGWVIHPLGLYRLFPTWMMFASVLPALLVFILIFLESQITTLIVSKPERKMIKGSGFHLDLLLVVGMGGVAALFGMPWLSATTVRSVTHANALTVMGKASGPGAAAQIQEVKEQRISGLLVSVLVGLSILMEPILSRIPLAVLFGIFLYMGVTSLSGIQLFDRILLLFKPPKYHPDVPFVKRVKTWRMHLFTGIQIICLAVLWVVKSTPASLALPFVLILTVPLRRLILPLIFRELELQCLDGDDAKVTFDEENGLDEYDEVPMPV</sequence>
<keyword id="KW-0007">Acetylation</keyword>
<keyword id="KW-0025">Alternative splicing</keyword>
<keyword id="KW-0039">Anion exchange</keyword>
<keyword id="KW-1003">Cell membrane</keyword>
<keyword id="KW-0903">Direct protein sequencing</keyword>
<keyword id="KW-0325">Glycoprotein</keyword>
<keyword id="KW-0406">Ion transport</keyword>
<keyword id="KW-0449">Lipoprotein</keyword>
<keyword id="KW-0472">Membrane</keyword>
<keyword id="KW-0564">Palmitate</keyword>
<keyword id="KW-0597">Phosphoprotein</keyword>
<keyword id="KW-1185">Reference proteome</keyword>
<keyword id="KW-0812">Transmembrane</keyword>
<keyword id="KW-1133">Transmembrane helix</keyword>
<keyword id="KW-0813">Transport</keyword>
<comment type="function">
    <text evidence="2">Functions both as a transporter that mediates electroneutral anion exchange across the cell membrane and as a structural protein. Component of the ankyrin-1 complex of the erythrocyte membrane; required for normal flexibility and stability of the erythrocyte membrane and for normal erythrocyte shape via the interactions of its cytoplasmic domain with cytoskeletal proteins, glycolytic enzymes, and hemoglobin. Functions as a transporter that mediates the 1:1 exchange of inorganic anions across the erythrocyte membrane. Mediates chloride-bicarbonate exchange in the kidney, and is required for normal acidification of the urine.</text>
</comment>
<comment type="catalytic activity">
    <reaction evidence="2">
        <text>hydrogencarbonate(in) + chloride(out) = hydrogencarbonate(out) + chloride(in)</text>
        <dbReference type="Rhea" id="RHEA:72363"/>
        <dbReference type="ChEBI" id="CHEBI:17544"/>
        <dbReference type="ChEBI" id="CHEBI:17996"/>
    </reaction>
</comment>
<comment type="subunit">
    <text evidence="2">A dimer in solution, but in its membrane environment, it exists primarily as a mixture of dimers and tetramers and spans the membrane asymmetrically. Component of the ankyrin-1 complex in the erythrocyte, composed of ANK1, RHCE, RHAG, SLC4A1, EPB42, GYPA, GYPB and AQP1. Interacts with STOM; this interaction positively regulates SLC4A1 activity. Interacts with GYPA; a GYPA monomer is bound at each end of the SLC4A1 dimer forming a heterotetramer. Three SLC4A1 dimers (Band 3-I, Band 3-II and Band 3-III) participates in the ankyrin-1 complex. Interacts (via the cytoplasmic domain) with EPB42; this interaction is mediated by the SLC4A1 Band 3-I dimer. Interacts (via the cytoplasmic domain) directly with ANK1; this interaction is mediated by the SLC4A1 Band 3-II and Band 3-III dimers.</text>
</comment>
<comment type="subunit">
    <molecule>Isoform 2</molecule>
    <text evidence="2">Interacts with TMEM139.</text>
</comment>
<comment type="subcellular location">
    <subcellularLocation>
        <location evidence="5">Cell membrane</location>
        <topology evidence="2">Multi-pass membrane protein</topology>
    </subcellularLocation>
    <subcellularLocation>
        <location evidence="2">Basolateral cell membrane</location>
        <topology evidence="2">Multi-pass membrane protein</topology>
    </subcellularLocation>
    <text evidence="2">Detected in the erythrocyte cell membrane and on the basolateral membrane of alpha-intercalated cells in the collecting duct in the kidney.</text>
</comment>
<comment type="alternative products">
    <event type="alternative splicing"/>
    <isoform>
        <id>P04919-1</id>
        <name>1</name>
        <name>Erythrocyte</name>
        <sequence type="displayed"/>
    </isoform>
    <isoform>
        <id>P04919-2</id>
        <name>2</name>
        <name>Kidney</name>
        <sequence type="described" ref="VSP_000454"/>
    </isoform>
</comment>
<comment type="tissue specificity">
    <text evidence="5">Detected in erythrocytes (at protein level).</text>
</comment>
<comment type="disruption phenotype">
    <text evidence="6">Gypa is not incorporated in the erythrocyte membrane.</text>
</comment>
<comment type="similarity">
    <text evidence="7">Belongs to the anion exchanger (TC 2.A.31) family.</text>
</comment>
<proteinExistence type="evidence at protein level"/>
<protein>
    <recommendedName>
        <fullName>Band 3 anion transport protein</fullName>
    </recommendedName>
    <alternativeName>
        <fullName evidence="7">Anion exchange protein 1</fullName>
        <shortName>AE 1</shortName>
        <shortName>Anion exchanger 1</shortName>
    </alternativeName>
    <alternativeName>
        <fullName>MEB3</fullName>
    </alternativeName>
    <alternativeName>
        <fullName>Solute carrier family 4 member 1</fullName>
    </alternativeName>
    <cdAntigenName>CD233</cdAntigenName>
</protein>
<accession>P04919</accession>